<gene>
    <name type="primary">wdr73</name>
</gene>
<organism>
    <name type="scientific">Xenopus laevis</name>
    <name type="common">African clawed frog</name>
    <dbReference type="NCBI Taxonomy" id="8355"/>
    <lineage>
        <taxon>Eukaryota</taxon>
        <taxon>Metazoa</taxon>
        <taxon>Chordata</taxon>
        <taxon>Craniata</taxon>
        <taxon>Vertebrata</taxon>
        <taxon>Euteleostomi</taxon>
        <taxon>Amphibia</taxon>
        <taxon>Batrachia</taxon>
        <taxon>Anura</taxon>
        <taxon>Pipoidea</taxon>
        <taxon>Pipidae</taxon>
        <taxon>Xenopodinae</taxon>
        <taxon>Xenopus</taxon>
        <taxon>Xenopus</taxon>
    </lineage>
</organism>
<accession>A5D8Q8</accession>
<comment type="function">
    <text evidence="1">Component of a multiprotein complex required for the assembly of the RNA endonuclease module of the integrator complex. Associates with ints9 and ints11 in the cytoplasm, stabilizing the ints9-ints11 heterodimer and blocking the active site of ints11. Brat1 then joins the complex and plugs the active site of ints11, leading to wdr73 release and nuclear import of ints9 and ints11.</text>
</comment>
<comment type="subcellular location">
    <subcellularLocation>
        <location evidence="1">Cytoplasm</location>
    </subcellularLocation>
    <subcellularLocation>
        <location evidence="1">Cytoplasm</location>
        <location evidence="1">Cytoskeleton</location>
        <location evidence="1">Spindle</location>
    </subcellularLocation>
    <subcellularLocation>
        <location evidence="1">Cytoplasm</location>
        <location evidence="1">Cytoskeleton</location>
        <location evidence="1">Spindle pole</location>
    </subcellularLocation>
    <subcellularLocation>
        <location evidence="1">Cleavage furrow</location>
    </subcellularLocation>
    <text evidence="1">During interphase, located in the cytosol. During mitosis, accumulates at the spindle poles and microtubule asters and later in the cleavage furrow.</text>
</comment>
<comment type="similarity">
    <text evidence="2">Belongs to the WD repeat WDR73 family.</text>
</comment>
<comment type="sequence caution" evidence="2">
    <conflict type="erroneous initiation">
        <sequence resource="EMBL-CDS" id="AAI41774"/>
    </conflict>
    <text>Extended N-terminus.</text>
</comment>
<evidence type="ECO:0000250" key="1">
    <source>
        <dbReference type="UniProtKB" id="Q6P4I2"/>
    </source>
</evidence>
<evidence type="ECO:0000305" key="2"/>
<reference key="1">
    <citation type="submission" date="2007-05" db="EMBL/GenBank/DDBJ databases">
        <authorList>
            <consortium name="NIH - Xenopus Gene Collection (XGC) project"/>
        </authorList>
    </citation>
    <scope>NUCLEOTIDE SEQUENCE [LARGE SCALE MRNA]</scope>
    <source>
        <tissue>Adipose tissue</tissue>
    </source>
</reference>
<feature type="chain" id="PRO_0000307283" description="Integrator complex assembly factor WDR73">
    <location>
        <begin position="1"/>
        <end position="369"/>
    </location>
</feature>
<feature type="repeat" description="WD 1">
    <location>
        <begin position="74"/>
        <end position="114"/>
    </location>
</feature>
<feature type="repeat" description="WD 2">
    <location>
        <begin position="266"/>
        <end position="306"/>
    </location>
</feature>
<feature type="repeat" description="WD 3">
    <location>
        <begin position="326"/>
        <end position="366"/>
    </location>
</feature>
<dbReference type="EMBL" id="BC141773">
    <property type="protein sequence ID" value="AAI41774.1"/>
    <property type="status" value="ALT_INIT"/>
    <property type="molecule type" value="mRNA"/>
</dbReference>
<dbReference type="SMR" id="A5D8Q8"/>
<dbReference type="AGR" id="Xenbase:XB-GENE-6253928"/>
<dbReference type="Xenbase" id="XB-GENE-6253928">
    <property type="gene designation" value="wdr73.L"/>
</dbReference>
<dbReference type="Proteomes" id="UP000186698">
    <property type="component" value="Unplaced"/>
</dbReference>
<dbReference type="GO" id="GO:0032154">
    <property type="term" value="C:cleavage furrow"/>
    <property type="evidence" value="ECO:0007669"/>
    <property type="project" value="UniProtKB-SubCell"/>
</dbReference>
<dbReference type="GO" id="GO:0005737">
    <property type="term" value="C:cytoplasm"/>
    <property type="evidence" value="ECO:0000250"/>
    <property type="project" value="UniProtKB"/>
</dbReference>
<dbReference type="GO" id="GO:0005829">
    <property type="term" value="C:cytosol"/>
    <property type="evidence" value="ECO:0007669"/>
    <property type="project" value="TreeGrafter"/>
</dbReference>
<dbReference type="GO" id="GO:0000922">
    <property type="term" value="C:spindle pole"/>
    <property type="evidence" value="ECO:0007669"/>
    <property type="project" value="UniProtKB-SubCell"/>
</dbReference>
<dbReference type="GO" id="GO:0030674">
    <property type="term" value="F:protein-macromolecule adaptor activity"/>
    <property type="evidence" value="ECO:0000250"/>
    <property type="project" value="UniProtKB"/>
</dbReference>
<dbReference type="GO" id="GO:0031122">
    <property type="term" value="P:cytoplasmic microtubule organization"/>
    <property type="evidence" value="ECO:0000318"/>
    <property type="project" value="GO_Central"/>
</dbReference>
<dbReference type="Gene3D" id="2.130.10.10">
    <property type="entry name" value="YVTN repeat-like/Quinoprotein amine dehydrogenase"/>
    <property type="match status" value="1"/>
</dbReference>
<dbReference type="InterPro" id="IPR015943">
    <property type="entry name" value="WD40/YVTN_repeat-like_dom_sf"/>
</dbReference>
<dbReference type="InterPro" id="IPR036322">
    <property type="entry name" value="WD40_repeat_dom_sf"/>
</dbReference>
<dbReference type="InterPro" id="IPR001680">
    <property type="entry name" value="WD40_rpt"/>
</dbReference>
<dbReference type="InterPro" id="IPR042795">
    <property type="entry name" value="Wdr73"/>
</dbReference>
<dbReference type="PANTHER" id="PTHR46947">
    <property type="entry name" value="WD REPEAT-CONTAINING PROTEIN 73"/>
    <property type="match status" value="1"/>
</dbReference>
<dbReference type="PANTHER" id="PTHR46947:SF1">
    <property type="entry name" value="WD REPEAT-CONTAINING PROTEIN 73"/>
    <property type="match status" value="1"/>
</dbReference>
<dbReference type="SMART" id="SM00320">
    <property type="entry name" value="WD40"/>
    <property type="match status" value="4"/>
</dbReference>
<dbReference type="SUPFAM" id="SSF50978">
    <property type="entry name" value="WD40 repeat-like"/>
    <property type="match status" value="1"/>
</dbReference>
<name>WDR73_XENLA</name>
<protein>
    <recommendedName>
        <fullName evidence="2">Integrator complex assembly factor WDR73</fullName>
    </recommendedName>
    <alternativeName>
        <fullName>WD repeat-containing protein 73</fullName>
    </alternativeName>
</protein>
<sequence length="369" mass="40249">MLESIRLYKDLHDFELQGPTRVVEWIGDKSICVAGYDSAKRNEILQLLIPQKLHAKENPGLCPERDLKVEHGGFIDEPVYSLKHIPQSSLIVTSGPASCPLWVWQIGPEDRDVIQPISTLPSDAGKGTWTRIATTTSASPQILHGSQADSIRLTDIESTKQIHTLGVSGSDGVSTLCFLDSRTVFVCCMNGRQFIADIRMPGAASEGRVGEEGLSCVTWCSAVHPSKEDVCSTVASVSSEGHMCLTDPRNLSVPLKCATWCTPIPAASEQFLSICWAPALSDCISVSGFGGSVQIFDTKRWDSAMKEREAVFIHKGHSVMGTCEDGREPTVTAHAWHPWKERTVLSAASDGSLHVWNWSDLPVHDGTEL</sequence>
<proteinExistence type="evidence at transcript level"/>
<keyword id="KW-0963">Cytoplasm</keyword>
<keyword id="KW-0206">Cytoskeleton</keyword>
<keyword id="KW-1185">Reference proteome</keyword>
<keyword id="KW-0677">Repeat</keyword>
<keyword id="KW-0853">WD repeat</keyword>